<dbReference type="EMBL" id="CU928161">
    <property type="protein sequence ID" value="CAR05615.1"/>
    <property type="molecule type" value="Genomic_DNA"/>
</dbReference>
<dbReference type="RefSeq" id="WP_001207201.1">
    <property type="nucleotide sequence ID" value="NC_011742.1"/>
</dbReference>
<dbReference type="EMDB" id="EMD-7970"/>
<dbReference type="EMDB" id="EMD-8826"/>
<dbReference type="EMDB" id="EMD-8829"/>
<dbReference type="SMR" id="B7MIX1"/>
<dbReference type="IntAct" id="B7MIX1">
    <property type="interactions" value="1"/>
</dbReference>
<dbReference type="GeneID" id="93777909"/>
<dbReference type="KEGG" id="ecz:ECS88_4446"/>
<dbReference type="HOGENOM" id="CLU_092227_0_2_6"/>
<dbReference type="Proteomes" id="UP000000747">
    <property type="component" value="Chromosome"/>
</dbReference>
<dbReference type="GO" id="GO:0015934">
    <property type="term" value="C:large ribosomal subunit"/>
    <property type="evidence" value="ECO:0007669"/>
    <property type="project" value="InterPro"/>
</dbReference>
<dbReference type="GO" id="GO:0070180">
    <property type="term" value="F:large ribosomal subunit rRNA binding"/>
    <property type="evidence" value="ECO:0007669"/>
    <property type="project" value="UniProtKB-UniRule"/>
</dbReference>
<dbReference type="GO" id="GO:0003735">
    <property type="term" value="F:structural constituent of ribosome"/>
    <property type="evidence" value="ECO:0007669"/>
    <property type="project" value="InterPro"/>
</dbReference>
<dbReference type="GO" id="GO:0006412">
    <property type="term" value="P:translation"/>
    <property type="evidence" value="ECO:0007669"/>
    <property type="project" value="UniProtKB-UniRule"/>
</dbReference>
<dbReference type="CDD" id="cd05797">
    <property type="entry name" value="Ribosomal_L10"/>
    <property type="match status" value="1"/>
</dbReference>
<dbReference type="FunFam" id="3.30.70.1730:FF:000001">
    <property type="entry name" value="50S ribosomal protein L10"/>
    <property type="match status" value="1"/>
</dbReference>
<dbReference type="Gene3D" id="3.30.70.1730">
    <property type="match status" value="1"/>
</dbReference>
<dbReference type="Gene3D" id="6.10.250.2350">
    <property type="match status" value="1"/>
</dbReference>
<dbReference type="HAMAP" id="MF_00362">
    <property type="entry name" value="Ribosomal_uL10"/>
    <property type="match status" value="1"/>
</dbReference>
<dbReference type="InterPro" id="IPR001790">
    <property type="entry name" value="Ribosomal_uL10"/>
</dbReference>
<dbReference type="InterPro" id="IPR043141">
    <property type="entry name" value="Ribosomal_uL10-like_sf"/>
</dbReference>
<dbReference type="InterPro" id="IPR022973">
    <property type="entry name" value="Ribosomal_uL10_bac"/>
</dbReference>
<dbReference type="InterPro" id="IPR047865">
    <property type="entry name" value="Ribosomal_uL10_bac_type"/>
</dbReference>
<dbReference type="InterPro" id="IPR002363">
    <property type="entry name" value="Ribosomal_uL10_CS_bac"/>
</dbReference>
<dbReference type="NCBIfam" id="NF000955">
    <property type="entry name" value="PRK00099.1-1"/>
    <property type="match status" value="1"/>
</dbReference>
<dbReference type="PANTHER" id="PTHR11560">
    <property type="entry name" value="39S RIBOSOMAL PROTEIN L10, MITOCHONDRIAL"/>
    <property type="match status" value="1"/>
</dbReference>
<dbReference type="Pfam" id="PF00466">
    <property type="entry name" value="Ribosomal_L10"/>
    <property type="match status" value="1"/>
</dbReference>
<dbReference type="SUPFAM" id="SSF160369">
    <property type="entry name" value="Ribosomal protein L10-like"/>
    <property type="match status" value="1"/>
</dbReference>
<dbReference type="PROSITE" id="PS01109">
    <property type="entry name" value="RIBOSOMAL_L10"/>
    <property type="match status" value="1"/>
</dbReference>
<sequence length="165" mass="17712">MALNLQDKQAIVAEVSEVAKGALSAVVADSRGVTVDKMTELRKAGREAGVYMRVVRNTLLRRAVEGTPFECLKDAFVGPTLIAYSMEHPGAAARLFKEFAKANAKFEVKAAAFEGELIPASQIDRLATLPTYEEAIARLMATMKEASAGKLVRTLAAVRDAKEAA</sequence>
<accession>B7MIX1</accession>
<reference key="1">
    <citation type="journal article" date="2009" name="PLoS Genet.">
        <title>Organised genome dynamics in the Escherichia coli species results in highly diverse adaptive paths.</title>
        <authorList>
            <person name="Touchon M."/>
            <person name="Hoede C."/>
            <person name="Tenaillon O."/>
            <person name="Barbe V."/>
            <person name="Baeriswyl S."/>
            <person name="Bidet P."/>
            <person name="Bingen E."/>
            <person name="Bonacorsi S."/>
            <person name="Bouchier C."/>
            <person name="Bouvet O."/>
            <person name="Calteau A."/>
            <person name="Chiapello H."/>
            <person name="Clermont O."/>
            <person name="Cruveiller S."/>
            <person name="Danchin A."/>
            <person name="Diard M."/>
            <person name="Dossat C."/>
            <person name="Karoui M.E."/>
            <person name="Frapy E."/>
            <person name="Garry L."/>
            <person name="Ghigo J.M."/>
            <person name="Gilles A.M."/>
            <person name="Johnson J."/>
            <person name="Le Bouguenec C."/>
            <person name="Lescat M."/>
            <person name="Mangenot S."/>
            <person name="Martinez-Jehanne V."/>
            <person name="Matic I."/>
            <person name="Nassif X."/>
            <person name="Oztas S."/>
            <person name="Petit M.A."/>
            <person name="Pichon C."/>
            <person name="Rouy Z."/>
            <person name="Ruf C.S."/>
            <person name="Schneider D."/>
            <person name="Tourret J."/>
            <person name="Vacherie B."/>
            <person name="Vallenet D."/>
            <person name="Medigue C."/>
            <person name="Rocha E.P.C."/>
            <person name="Denamur E."/>
        </authorList>
    </citation>
    <scope>NUCLEOTIDE SEQUENCE [LARGE SCALE GENOMIC DNA]</scope>
    <source>
        <strain>S88 / ExPEC</strain>
    </source>
</reference>
<gene>
    <name evidence="1" type="primary">rplJ</name>
    <name type="ordered locus">ECS88_4446</name>
</gene>
<organism>
    <name type="scientific">Escherichia coli O45:K1 (strain S88 / ExPEC)</name>
    <dbReference type="NCBI Taxonomy" id="585035"/>
    <lineage>
        <taxon>Bacteria</taxon>
        <taxon>Pseudomonadati</taxon>
        <taxon>Pseudomonadota</taxon>
        <taxon>Gammaproteobacteria</taxon>
        <taxon>Enterobacterales</taxon>
        <taxon>Enterobacteriaceae</taxon>
        <taxon>Escherichia</taxon>
    </lineage>
</organism>
<keyword id="KW-0007">Acetylation</keyword>
<keyword id="KW-1185">Reference proteome</keyword>
<keyword id="KW-0687">Ribonucleoprotein</keyword>
<keyword id="KW-0689">Ribosomal protein</keyword>
<keyword id="KW-0694">RNA-binding</keyword>
<keyword id="KW-0699">rRNA-binding</keyword>
<protein>
    <recommendedName>
        <fullName evidence="1">Large ribosomal subunit protein uL10</fullName>
    </recommendedName>
    <alternativeName>
        <fullName evidence="2">50S ribosomal protein L10</fullName>
    </alternativeName>
</protein>
<comment type="function">
    <text evidence="1">Forms part of the ribosomal stalk, playing a central role in the interaction of the ribosome with GTP-bound translation factors.</text>
</comment>
<comment type="subunit">
    <text evidence="1">Part of the ribosomal stalk of the 50S ribosomal subunit. The N-terminus interacts with L11 and the large rRNA to form the base of the stalk. The C-terminus forms an elongated spine to which L12 dimers bind in a sequential fashion forming a multimeric L10(L12)X complex.</text>
</comment>
<comment type="similarity">
    <text evidence="1">Belongs to the universal ribosomal protein uL10 family.</text>
</comment>
<name>RL10_ECO45</name>
<evidence type="ECO:0000255" key="1">
    <source>
        <dbReference type="HAMAP-Rule" id="MF_00362"/>
    </source>
</evidence>
<evidence type="ECO:0000305" key="2"/>
<feature type="chain" id="PRO_1000120952" description="Large ribosomal subunit protein uL10">
    <location>
        <begin position="1"/>
        <end position="165"/>
    </location>
</feature>
<feature type="modified residue" description="N6-acetyllysine" evidence="1">
    <location>
        <position position="37"/>
    </location>
</feature>
<feature type="modified residue" description="N6-acetyllysine" evidence="1">
    <location>
        <position position="105"/>
    </location>
</feature>
<proteinExistence type="inferred from homology"/>